<gene>
    <name type="primary">ND1</name>
    <name type="synonym">NAD1</name>
</gene>
<keyword id="KW-0002">3D-structure</keyword>
<keyword id="KW-0249">Electron transport</keyword>
<keyword id="KW-0472">Membrane</keyword>
<keyword id="KW-0496">Mitochondrion</keyword>
<keyword id="KW-0999">Mitochondrion inner membrane</keyword>
<keyword id="KW-0520">NAD</keyword>
<keyword id="KW-0679">Respiratory chain</keyword>
<keyword id="KW-1278">Translocase</keyword>
<keyword id="KW-0812">Transmembrane</keyword>
<keyword id="KW-1133">Transmembrane helix</keyword>
<keyword id="KW-0813">Transport</keyword>
<keyword id="KW-0830">Ubiquinone</keyword>
<accession>P11658</accession>
<name>NU1M_CHLRE</name>
<comment type="function">
    <text evidence="1">Core subunit of the mitochondrial membrane respiratory chain NADH dehydrogenase (Complex I) that is believed to belong to the minimal assembly required for catalysis. Complex I functions in the transfer of electrons from NADH to the respiratory chain. The immediate electron acceptor for the enzyme is believed to be ubiquinone (By similarity).</text>
</comment>
<comment type="catalytic activity">
    <reaction>
        <text>a ubiquinone + NADH + 5 H(+)(in) = a ubiquinol + NAD(+) + 4 H(+)(out)</text>
        <dbReference type="Rhea" id="RHEA:29091"/>
        <dbReference type="Rhea" id="RHEA-COMP:9565"/>
        <dbReference type="Rhea" id="RHEA-COMP:9566"/>
        <dbReference type="ChEBI" id="CHEBI:15378"/>
        <dbReference type="ChEBI" id="CHEBI:16389"/>
        <dbReference type="ChEBI" id="CHEBI:17976"/>
        <dbReference type="ChEBI" id="CHEBI:57540"/>
        <dbReference type="ChEBI" id="CHEBI:57945"/>
        <dbReference type="EC" id="7.1.1.2"/>
    </reaction>
</comment>
<comment type="subcellular location">
    <subcellularLocation>
        <location evidence="1">Mitochondrion inner membrane</location>
        <topology evidence="1">Multi-pass membrane protein</topology>
    </subcellularLocation>
</comment>
<comment type="similarity">
    <text evidence="3">Belongs to the complex I subunit 1 family.</text>
</comment>
<organism>
    <name type="scientific">Chlamydomonas reinhardtii</name>
    <name type="common">Chlamydomonas smithii</name>
    <dbReference type="NCBI Taxonomy" id="3055"/>
    <lineage>
        <taxon>Eukaryota</taxon>
        <taxon>Viridiplantae</taxon>
        <taxon>Chlorophyta</taxon>
        <taxon>core chlorophytes</taxon>
        <taxon>Chlorophyceae</taxon>
        <taxon>CS clade</taxon>
        <taxon>Chlamydomonadales</taxon>
        <taxon>Chlamydomonadaceae</taxon>
        <taxon>Chlamydomonas</taxon>
    </lineage>
</organism>
<protein>
    <recommendedName>
        <fullName>NADH-ubiquinone oxidoreductase chain 1</fullName>
        <ecNumber>7.1.1.2</ecNumber>
    </recommendedName>
    <alternativeName>
        <fullName>NADH dehydrogenase subunit 1</fullName>
    </alternativeName>
</protein>
<sequence length="292" mass="31590">MIVASILILIVPVLLSVAMFTLAERTVMASMQRRFGPQVSGISGLLQPFWDGLKLGVKEPVLPDSSSAGAFAASPMISFVLSQVAWVGICISDASFQGLVIMAISSLAVYGVMLAGWASNSKYAFLGCLRSVALMVSYELSLGAALLSIGLFVTDGTGMKCLNFAEMPTTPQYAMLPLCLIFLVCILAETKRDPFDLPEAELVAGYNVEYSSLGFALFFIAEYANMAVMSAIASIYFLGGFSALKITALFFAFVWTRGTLPRYRYDQFMRLGWKAFLPLTLAFFALHASVAI</sequence>
<geneLocation type="mitochondrion"/>
<feature type="chain" id="PRO_0000117367" description="NADH-ubiquinone oxidoreductase chain 1">
    <location>
        <begin position="1"/>
        <end position="292"/>
    </location>
</feature>
<feature type="transmembrane region" description="Helical" evidence="2">
    <location>
        <begin position="2"/>
        <end position="22"/>
    </location>
</feature>
<feature type="transmembrane region" description="Helical" evidence="2">
    <location>
        <begin position="71"/>
        <end position="91"/>
    </location>
</feature>
<feature type="transmembrane region" description="Helical" evidence="2">
    <location>
        <begin position="98"/>
        <end position="118"/>
    </location>
</feature>
<feature type="transmembrane region" description="Helical" evidence="2">
    <location>
        <begin position="132"/>
        <end position="152"/>
    </location>
</feature>
<feature type="transmembrane region" description="Helical" evidence="2">
    <location>
        <begin position="167"/>
        <end position="187"/>
    </location>
</feature>
<feature type="transmembrane region" description="Helical" evidence="2">
    <location>
        <begin position="213"/>
        <end position="233"/>
    </location>
</feature>
<feature type="transmembrane region" description="Helical" evidence="2">
    <location>
        <begin position="235"/>
        <end position="255"/>
    </location>
</feature>
<feature type="transmembrane region" description="Helical" evidence="2">
    <location>
        <begin position="272"/>
        <end position="292"/>
    </location>
</feature>
<reference key="1">
    <citation type="journal article" date="1988" name="EMBO J.">
        <title>Genes encoding a subunit of respiratory NADH dehydrogenase (ND1) and a reverse transcriptase-like protein (RTL) are linked to ribosomal RNA gene pieces in Chlamydomonas reinhardtii mitochondrial DNA.</title>
        <authorList>
            <person name="Boer P.H."/>
            <person name="Gray M.W."/>
        </authorList>
    </citation>
    <scope>NUCLEOTIDE SEQUENCE [GENOMIC DNA]</scope>
    <source>
        <strain>cw15</strain>
    </source>
</reference>
<reference key="2">
    <citation type="submission" date="1995-01" db="EMBL/GenBank/DDBJ databases">
        <authorList>
            <person name="Gray M.W."/>
        </authorList>
    </citation>
    <scope>NUCLEOTIDE SEQUENCE [GENOMIC DNA]</scope>
    <source>
        <strain>cw15</strain>
    </source>
</reference>
<dbReference type="EC" id="7.1.1.2"/>
<dbReference type="EMBL" id="X54860">
    <property type="protein sequence ID" value="CAA38645.1"/>
    <property type="molecule type" value="Genomic_DNA"/>
</dbReference>
<dbReference type="EMBL" id="U03843">
    <property type="protein sequence ID" value="AAB93446.1"/>
    <property type="molecule type" value="Genomic_DNA"/>
</dbReference>
<dbReference type="PIR" id="S01650">
    <property type="entry name" value="S01650"/>
</dbReference>
<dbReference type="RefSeq" id="NP_042570.1">
    <property type="nucleotide sequence ID" value="NC_001638.1"/>
</dbReference>
<dbReference type="PDB" id="9F5X">
    <property type="method" value="EM"/>
    <property type="resolution" value="2.82 A"/>
    <property type="chains" value="Q=1-292"/>
</dbReference>
<dbReference type="PDB" id="9F5Y">
    <property type="method" value="EM"/>
    <property type="resolution" value="2.51 A"/>
    <property type="chains" value="Q=1-292"/>
</dbReference>
<dbReference type="PDB" id="9F62">
    <property type="method" value="EM"/>
    <property type="resolution" value="5.44 A"/>
    <property type="chains" value="5Q/Q=1-292"/>
</dbReference>
<dbReference type="PDBsum" id="9F5X"/>
<dbReference type="PDBsum" id="9F5Y"/>
<dbReference type="PDBsum" id="9F62"/>
<dbReference type="EMDB" id="EMD-50202"/>
<dbReference type="EMDB" id="EMD-50203"/>
<dbReference type="EMDB" id="EMD-50210"/>
<dbReference type="SMR" id="P11658"/>
<dbReference type="TCDB" id="3.D.1.6.4">
    <property type="family name" value="the h+ or na+-translocating nadh dehydrogenase (ndh) family"/>
</dbReference>
<dbReference type="PaxDb" id="3055-AAB93446"/>
<dbReference type="GeneID" id="801499"/>
<dbReference type="KEGG" id="cre:ChrepMp07"/>
<dbReference type="eggNOG" id="KOG4770">
    <property type="taxonomic scope" value="Eukaryota"/>
</dbReference>
<dbReference type="HOGENOM" id="CLU_015134_0_1_1"/>
<dbReference type="BioCyc" id="CHLAMY:CHREPMP07-MONOMER"/>
<dbReference type="GO" id="GO:0005743">
    <property type="term" value="C:mitochondrial inner membrane"/>
    <property type="evidence" value="ECO:0007669"/>
    <property type="project" value="UniProtKB-SubCell"/>
</dbReference>
<dbReference type="GO" id="GO:0008137">
    <property type="term" value="F:NADH dehydrogenase (ubiquinone) activity"/>
    <property type="evidence" value="ECO:0007669"/>
    <property type="project" value="UniProtKB-EC"/>
</dbReference>
<dbReference type="HAMAP" id="MF_01350">
    <property type="entry name" value="NDH1_NuoH"/>
    <property type="match status" value="1"/>
</dbReference>
<dbReference type="InterPro" id="IPR001694">
    <property type="entry name" value="NADH_UbQ_OxRdtase_su1/FPO"/>
</dbReference>
<dbReference type="InterPro" id="IPR018086">
    <property type="entry name" value="NADH_UbQ_OxRdtase_su1_CS"/>
</dbReference>
<dbReference type="PANTHER" id="PTHR11432">
    <property type="entry name" value="NADH DEHYDROGENASE SUBUNIT 1"/>
    <property type="match status" value="1"/>
</dbReference>
<dbReference type="PANTHER" id="PTHR11432:SF3">
    <property type="entry name" value="NADH-UBIQUINONE OXIDOREDUCTASE CHAIN 1"/>
    <property type="match status" value="1"/>
</dbReference>
<dbReference type="Pfam" id="PF00146">
    <property type="entry name" value="NADHdh"/>
    <property type="match status" value="1"/>
</dbReference>
<dbReference type="PROSITE" id="PS00667">
    <property type="entry name" value="COMPLEX1_ND1_1"/>
    <property type="match status" value="1"/>
</dbReference>
<dbReference type="PROSITE" id="PS00668">
    <property type="entry name" value="COMPLEX1_ND1_2"/>
    <property type="match status" value="1"/>
</dbReference>
<evidence type="ECO:0000250" key="1"/>
<evidence type="ECO:0000255" key="2"/>
<evidence type="ECO:0000305" key="3"/>
<proteinExistence type="evidence at protein level"/>